<accession>B6DCP5</accession>
<comment type="subcellular location">
    <subcellularLocation>
        <location evidence="1">Secreted</location>
    </subcellularLocation>
</comment>
<comment type="tissue specificity">
    <text>Expressed by the venom gland.</text>
</comment>
<comment type="domain">
    <text evidence="1">The presence of a 'disulfide through disulfide knot' structurally defines this protein as a knottin.</text>
</comment>
<comment type="similarity">
    <text evidence="3">Belongs to the neurotoxin 19 (CSTX) family. 03 subfamily.</text>
</comment>
<keyword id="KW-1015">Disulfide bond</keyword>
<keyword id="KW-0960">Knottin</keyword>
<keyword id="KW-0964">Secreted</keyword>
<keyword id="KW-0732">Signal</keyword>
<keyword id="KW-0800">Toxin</keyword>
<organism>
    <name type="scientific">Lycosa singoriensis</name>
    <name type="common">Wolf spider</name>
    <name type="synonym">Aranea singoriensis</name>
    <dbReference type="NCBI Taxonomy" id="434756"/>
    <lineage>
        <taxon>Eukaryota</taxon>
        <taxon>Metazoa</taxon>
        <taxon>Ecdysozoa</taxon>
        <taxon>Arthropoda</taxon>
        <taxon>Chelicerata</taxon>
        <taxon>Arachnida</taxon>
        <taxon>Araneae</taxon>
        <taxon>Araneomorphae</taxon>
        <taxon>Entelegynae</taxon>
        <taxon>Lycosoidea</taxon>
        <taxon>Lycosidae</taxon>
        <taxon>Lycosa</taxon>
    </lineage>
</organism>
<name>TX156_LYCSI</name>
<sequence length="110" mass="12378">MKFVLLFGVLLVTLFSYSSAEMLDDFDQADEDELLSLIEKEEARKDCIPKHHECTSNKHGCCRGHSFKYKCQCTTVVTQSGEETERCFCGTPPHHEAAELVVGFGKKIFG</sequence>
<feature type="signal peptide" evidence="2">
    <location>
        <begin position="1"/>
        <end position="20"/>
    </location>
</feature>
<feature type="propeptide" id="PRO_0000401607" evidence="1">
    <location>
        <begin position="21"/>
        <end position="44"/>
    </location>
</feature>
<feature type="chain" id="PRO_0000401608" description="U1-lycotoxin-Ls1mm">
    <location>
        <begin position="45"/>
        <end position="110"/>
    </location>
</feature>
<feature type="disulfide bond" evidence="1">
    <location>
        <begin position="47"/>
        <end position="62"/>
    </location>
</feature>
<feature type="disulfide bond" evidence="1">
    <location>
        <begin position="54"/>
        <end position="71"/>
    </location>
</feature>
<feature type="disulfide bond" evidence="1">
    <location>
        <begin position="61"/>
        <end position="89"/>
    </location>
</feature>
<feature type="disulfide bond" evidence="1">
    <location>
        <begin position="73"/>
        <end position="87"/>
    </location>
</feature>
<reference key="1">
    <citation type="journal article" date="2010" name="Zoology">
        <title>Transcriptome analysis of the venom glands of the Chinese wolf spider Lycosa singoriensis.</title>
        <authorList>
            <person name="Zhang Y."/>
            <person name="Chen J."/>
            <person name="Tang X."/>
            <person name="Wang F."/>
            <person name="Jiang L."/>
            <person name="Xiong X."/>
            <person name="Wang M."/>
            <person name="Rong M."/>
            <person name="Liu Z."/>
            <person name="Liang S."/>
        </authorList>
    </citation>
    <scope>NUCLEOTIDE SEQUENCE [LARGE SCALE MRNA]</scope>
    <source>
        <tissue>Venom gland</tissue>
    </source>
</reference>
<protein>
    <recommendedName>
        <fullName>U1-lycotoxin-Ls1mm</fullName>
    </recommendedName>
    <alternativeName>
        <fullName>Toxin-like structure LSTX-A56</fullName>
    </alternativeName>
</protein>
<proteinExistence type="evidence at transcript level"/>
<dbReference type="EMBL" id="EU925979">
    <property type="protein sequence ID" value="ACI41311.1"/>
    <property type="molecule type" value="mRNA"/>
</dbReference>
<dbReference type="EMBL" id="FM863983">
    <property type="protein sequence ID" value="CAS03581.1"/>
    <property type="molecule type" value="mRNA"/>
</dbReference>
<dbReference type="SMR" id="B6DCP5"/>
<dbReference type="ArachnoServer" id="AS000928">
    <property type="toxin name" value="U1-lycotoxin-Ls1mm"/>
</dbReference>
<dbReference type="GO" id="GO:0005576">
    <property type="term" value="C:extracellular region"/>
    <property type="evidence" value="ECO:0007669"/>
    <property type="project" value="UniProtKB-SubCell"/>
</dbReference>
<dbReference type="GO" id="GO:0090729">
    <property type="term" value="F:toxin activity"/>
    <property type="evidence" value="ECO:0007669"/>
    <property type="project" value="UniProtKB-KW"/>
</dbReference>
<dbReference type="InterPro" id="IPR019553">
    <property type="entry name" value="Spider_toxin_CSTX_knottin"/>
</dbReference>
<dbReference type="InterPro" id="IPR011142">
    <property type="entry name" value="Spider_toxin_CSTX_Knottin_CS"/>
</dbReference>
<dbReference type="Pfam" id="PF10530">
    <property type="entry name" value="Toxin_35"/>
    <property type="match status" value="1"/>
</dbReference>
<dbReference type="PROSITE" id="PS60029">
    <property type="entry name" value="SPIDER_CSTX"/>
    <property type="match status" value="1"/>
</dbReference>
<evidence type="ECO:0000250" key="1"/>
<evidence type="ECO:0000255" key="2"/>
<evidence type="ECO:0000305" key="3"/>